<name>ARNT_PSEP7</name>
<gene>
    <name evidence="1" type="primary">arnT</name>
    <name type="ordered locus">PSPA7_1589</name>
</gene>
<sequence>MNRRQTWSLLLIAFGLFYLVPLSNHGLWIPDETRYAQISQAMLLGGDWVSPHFLGLRYFEKPVAGYWMIALGQAVFGENLFGVRIASVVATALSVLLAYLLARRLWRDPRTSLACALLYASFGLIAGQSGYANLDPQFTFWVNLSLVALWYALDAGSRRARLLGWTLLGLACGMGFLTKGFLAWLLPVLVALPYMLWQRRWRELLGYGALAVLVALLVCLPWALAVHAREADYWRFFFWHEHIRRFAGEDAQHSRPWWFYLPLLAVACLPWSGLLPSALRQAWHERHQPPVAFLALWLLLPLAFFSLSRGKLPTYIMPCLLPLALLMGHALVQRLRQADSLALRGNGLLNLGLALLALAALAYLQLRKPVYQEEPFELFLVLLVIGAWAAAGLAQWRYPLRAWAAPLLASWVLIALLPAAMPNQVVQNKTPDLFVAEHLDELTGARHLLSNDLGAASALAWRLRRGDVTLYDTRGELKYGLSYPEHSQRSVPLADIRQWLWRARQDGSVAVLLRINSASDRYQLALLPGDGERYRNGNLVLAVLPQVRP</sequence>
<accession>A6V1N8</accession>
<keyword id="KW-0997">Cell inner membrane</keyword>
<keyword id="KW-1003">Cell membrane</keyword>
<keyword id="KW-0328">Glycosyltransferase</keyword>
<keyword id="KW-0441">Lipid A biosynthesis</keyword>
<keyword id="KW-0444">Lipid biosynthesis</keyword>
<keyword id="KW-0443">Lipid metabolism</keyword>
<keyword id="KW-0448">Lipopolysaccharide biosynthesis</keyword>
<keyword id="KW-0472">Membrane</keyword>
<keyword id="KW-0808">Transferase</keyword>
<keyword id="KW-0812">Transmembrane</keyword>
<keyword id="KW-1133">Transmembrane helix</keyword>
<feature type="chain" id="PRO_0000380015" description="Undecaprenyl phosphate-alpha-4-amino-4-deoxy-L-arabinose arabinosyl transferase">
    <location>
        <begin position="1"/>
        <end position="549"/>
    </location>
</feature>
<feature type="transmembrane region" description="Helical" evidence="1">
    <location>
        <begin position="9"/>
        <end position="29"/>
    </location>
</feature>
<feature type="transmembrane region" description="Helical" evidence="1">
    <location>
        <begin position="80"/>
        <end position="100"/>
    </location>
</feature>
<feature type="transmembrane region" description="Helical" evidence="1">
    <location>
        <begin position="112"/>
        <end position="132"/>
    </location>
</feature>
<feature type="transmembrane region" description="Helical" evidence="1">
    <location>
        <begin position="136"/>
        <end position="156"/>
    </location>
</feature>
<feature type="transmembrane region" description="Helical" evidence="1">
    <location>
        <begin position="176"/>
        <end position="196"/>
    </location>
</feature>
<feature type="transmembrane region" description="Helical" evidence="1">
    <location>
        <begin position="204"/>
        <end position="224"/>
    </location>
</feature>
<feature type="transmembrane region" description="Helical" evidence="1">
    <location>
        <begin position="256"/>
        <end position="276"/>
    </location>
</feature>
<feature type="transmembrane region" description="Helical" evidence="1">
    <location>
        <begin position="288"/>
        <end position="308"/>
    </location>
</feature>
<feature type="transmembrane region" description="Helical" evidence="1">
    <location>
        <begin position="312"/>
        <end position="332"/>
    </location>
</feature>
<feature type="transmembrane region" description="Helical" evidence="1">
    <location>
        <begin position="346"/>
        <end position="366"/>
    </location>
</feature>
<feature type="transmembrane region" description="Helical" evidence="1">
    <location>
        <begin position="376"/>
        <end position="396"/>
    </location>
</feature>
<feature type="transmembrane region" description="Helical" evidence="1">
    <location>
        <begin position="402"/>
        <end position="422"/>
    </location>
</feature>
<organism>
    <name type="scientific">Pseudomonas paraeruginosa (strain DSM 24068 / PA7)</name>
    <name type="common">Pseudomonas aeruginosa (strain PA7)</name>
    <dbReference type="NCBI Taxonomy" id="381754"/>
    <lineage>
        <taxon>Bacteria</taxon>
        <taxon>Pseudomonadati</taxon>
        <taxon>Pseudomonadota</taxon>
        <taxon>Gammaproteobacteria</taxon>
        <taxon>Pseudomonadales</taxon>
        <taxon>Pseudomonadaceae</taxon>
        <taxon>Pseudomonas</taxon>
        <taxon>Pseudomonas paraeruginosa</taxon>
    </lineage>
</organism>
<protein>
    <recommendedName>
        <fullName evidence="1">Undecaprenyl phosphate-alpha-4-amino-4-deoxy-L-arabinose arabinosyl transferase</fullName>
        <ecNumber evidence="1">2.4.2.43</ecNumber>
    </recommendedName>
    <alternativeName>
        <fullName evidence="1">4-amino-4-deoxy-L-arabinose lipid A transferase</fullName>
    </alternativeName>
    <alternativeName>
        <fullName evidence="1">Lipid IV(A) 4-amino-4-deoxy-L-arabinosyltransferase</fullName>
    </alternativeName>
    <alternativeName>
        <fullName evidence="1">Undecaprenyl phosphate-alpha-L-Ara4N transferase</fullName>
    </alternativeName>
</protein>
<evidence type="ECO:0000255" key="1">
    <source>
        <dbReference type="HAMAP-Rule" id="MF_01165"/>
    </source>
</evidence>
<reference key="1">
    <citation type="submission" date="2007-06" db="EMBL/GenBank/DDBJ databases">
        <authorList>
            <person name="Dodson R.J."/>
            <person name="Harkins D."/>
            <person name="Paulsen I.T."/>
        </authorList>
    </citation>
    <scope>NUCLEOTIDE SEQUENCE [LARGE SCALE GENOMIC DNA]</scope>
    <source>
        <strain>DSM 24068 / PA7</strain>
    </source>
</reference>
<dbReference type="EC" id="2.4.2.43" evidence="1"/>
<dbReference type="EMBL" id="CP000744">
    <property type="protein sequence ID" value="ABR84563.1"/>
    <property type="molecule type" value="Genomic_DNA"/>
</dbReference>
<dbReference type="RefSeq" id="WP_012074756.1">
    <property type="nucleotide sequence ID" value="NC_009656.1"/>
</dbReference>
<dbReference type="SMR" id="A6V1N8"/>
<dbReference type="CAZy" id="GT83">
    <property type="family name" value="Glycosyltransferase Family 83"/>
</dbReference>
<dbReference type="KEGG" id="pap:PSPA7_1589"/>
<dbReference type="HOGENOM" id="CLU_019200_2_1_6"/>
<dbReference type="UniPathway" id="UPA00037"/>
<dbReference type="Proteomes" id="UP000001582">
    <property type="component" value="Chromosome"/>
</dbReference>
<dbReference type="GO" id="GO:0005886">
    <property type="term" value="C:plasma membrane"/>
    <property type="evidence" value="ECO:0007669"/>
    <property type="project" value="UniProtKB-SubCell"/>
</dbReference>
<dbReference type="GO" id="GO:0103015">
    <property type="term" value="F:4-amino-4-deoxy-L-arabinose transferase activity"/>
    <property type="evidence" value="ECO:0007669"/>
    <property type="project" value="UniProtKB-EC"/>
</dbReference>
<dbReference type="GO" id="GO:0000030">
    <property type="term" value="F:mannosyltransferase activity"/>
    <property type="evidence" value="ECO:0007669"/>
    <property type="project" value="InterPro"/>
</dbReference>
<dbReference type="GO" id="GO:0009245">
    <property type="term" value="P:lipid A biosynthetic process"/>
    <property type="evidence" value="ECO:0007669"/>
    <property type="project" value="UniProtKB-UniRule"/>
</dbReference>
<dbReference type="GO" id="GO:0009103">
    <property type="term" value="P:lipopolysaccharide biosynthetic process"/>
    <property type="evidence" value="ECO:0007669"/>
    <property type="project" value="UniProtKB-KW"/>
</dbReference>
<dbReference type="GO" id="GO:0006493">
    <property type="term" value="P:protein O-linked glycosylation"/>
    <property type="evidence" value="ECO:0007669"/>
    <property type="project" value="InterPro"/>
</dbReference>
<dbReference type="GO" id="GO:0010041">
    <property type="term" value="P:response to iron(III) ion"/>
    <property type="evidence" value="ECO:0007669"/>
    <property type="project" value="TreeGrafter"/>
</dbReference>
<dbReference type="HAMAP" id="MF_01165">
    <property type="entry name" value="ArnT_transfer"/>
    <property type="match status" value="1"/>
</dbReference>
<dbReference type="InterPro" id="IPR022839">
    <property type="entry name" value="ArnT_tfrase"/>
</dbReference>
<dbReference type="InterPro" id="IPR003342">
    <property type="entry name" value="Glyco_trans_39/83"/>
</dbReference>
<dbReference type="InterPro" id="IPR050297">
    <property type="entry name" value="LipidA_mod_glycosyltrf_83"/>
</dbReference>
<dbReference type="NCBIfam" id="NF009784">
    <property type="entry name" value="PRK13279.1"/>
    <property type="match status" value="1"/>
</dbReference>
<dbReference type="PANTHER" id="PTHR33908">
    <property type="entry name" value="MANNOSYLTRANSFERASE YKCB-RELATED"/>
    <property type="match status" value="1"/>
</dbReference>
<dbReference type="PANTHER" id="PTHR33908:SF3">
    <property type="entry name" value="UNDECAPRENYL PHOSPHATE-ALPHA-4-AMINO-4-DEOXY-L-ARABINOSE ARABINOSYL TRANSFERASE"/>
    <property type="match status" value="1"/>
</dbReference>
<dbReference type="Pfam" id="PF02366">
    <property type="entry name" value="PMT"/>
    <property type="match status" value="1"/>
</dbReference>
<proteinExistence type="inferred from homology"/>
<comment type="function">
    <text evidence="1">Catalyzes the transfer of the L-Ara4N moiety of the glycolipid undecaprenyl phosphate-alpha-L-Ara4N to lipid A. The modified arabinose is attached to lipid A and is required for resistance to polymyxin and cationic antimicrobial peptides.</text>
</comment>
<comment type="catalytic activity">
    <reaction evidence="1">
        <text>4-amino-4-deoxy-alpha-L-arabinopyranosyl di-trans,octa-cis-undecaprenyl phosphate + lipid IVA = lipid IIA + di-trans,octa-cis-undecaprenyl phosphate.</text>
        <dbReference type="EC" id="2.4.2.43"/>
    </reaction>
</comment>
<comment type="pathway">
    <text evidence="1">Lipopolysaccharide metabolism; 4-amino-4-deoxy-beta-L-arabinose-lipid A biosynthesis.</text>
</comment>
<comment type="subcellular location">
    <subcellularLocation>
        <location evidence="1">Cell inner membrane</location>
        <topology evidence="1">Multi-pass membrane protein</topology>
    </subcellularLocation>
</comment>
<comment type="similarity">
    <text evidence="1">Belongs to the glycosyltransferase 83 family.</text>
</comment>